<organism>
    <name type="scientific">Strongylocentrotus purpuratus</name>
    <name type="common">Purple sea urchin</name>
    <dbReference type="NCBI Taxonomy" id="7668"/>
    <lineage>
        <taxon>Eukaryota</taxon>
        <taxon>Metazoa</taxon>
        <taxon>Echinodermata</taxon>
        <taxon>Eleutherozoa</taxon>
        <taxon>Echinozoa</taxon>
        <taxon>Echinoidea</taxon>
        <taxon>Euechinoidea</taxon>
        <taxon>Echinacea</taxon>
        <taxon>Camarodonta</taxon>
        <taxon>Echinidea</taxon>
        <taxon>Strongylocentrotidae</taxon>
        <taxon>Strongylocentrotus</taxon>
    </lineage>
</organism>
<protein>
    <recommendedName>
        <fullName>Actin, cytoskeletal 2A</fullName>
        <ecNumber evidence="6">3.6.4.-</ecNumber>
    </recommendedName>
    <alternativeName>
        <fullName>Actin, cytoskeletal IIA</fullName>
    </alternativeName>
    <component>
        <recommendedName>
            <fullName>Actin, cytoskeletal 2A, intermediate form</fullName>
        </recommendedName>
    </component>
</protein>
<dbReference type="EC" id="3.6.4.-" evidence="6"/>
<dbReference type="EMBL" id="AH001097">
    <property type="protein sequence ID" value="AAA30031.1"/>
    <property type="molecule type" value="Genomic_DNA"/>
</dbReference>
<dbReference type="EMBL" id="J01170">
    <property type="protein sequence ID" value="AAC41545.1"/>
    <property type="molecule type" value="Genomic_DNA"/>
</dbReference>
<dbReference type="EMBL" id="J01169">
    <property type="protein sequence ID" value="AAC41544.1"/>
    <property type="molecule type" value="mRNA"/>
</dbReference>
<dbReference type="EMBL" id="M35321">
    <property type="status" value="NOT_ANNOTATED_CDS"/>
    <property type="molecule type" value="Genomic_DNA"/>
</dbReference>
<dbReference type="SMR" id="Q07903"/>
<dbReference type="FunCoup" id="Q07903">
    <property type="interactions" value="1849"/>
</dbReference>
<dbReference type="STRING" id="7668.Q07903"/>
<dbReference type="HOGENOM" id="CLU_027965_0_2_1"/>
<dbReference type="InParanoid" id="Q07903"/>
<dbReference type="Proteomes" id="UP000007110">
    <property type="component" value="Unassembled WGS sequence"/>
</dbReference>
<dbReference type="GO" id="GO:0005737">
    <property type="term" value="C:cytoplasm"/>
    <property type="evidence" value="ECO:0007669"/>
    <property type="project" value="UniProtKB-SubCell"/>
</dbReference>
<dbReference type="GO" id="GO:0005856">
    <property type="term" value="C:cytoskeleton"/>
    <property type="evidence" value="ECO:0007669"/>
    <property type="project" value="UniProtKB-SubCell"/>
</dbReference>
<dbReference type="GO" id="GO:0005524">
    <property type="term" value="F:ATP binding"/>
    <property type="evidence" value="ECO:0007669"/>
    <property type="project" value="UniProtKB-KW"/>
</dbReference>
<dbReference type="GO" id="GO:0016787">
    <property type="term" value="F:hydrolase activity"/>
    <property type="evidence" value="ECO:0007669"/>
    <property type="project" value="UniProtKB-KW"/>
</dbReference>
<dbReference type="CDD" id="cd10224">
    <property type="entry name" value="ASKHA_NBD_actin"/>
    <property type="match status" value="1"/>
</dbReference>
<dbReference type="FunFam" id="3.30.420.40:FF:000291">
    <property type="entry name" value="Actin, alpha skeletal muscle"/>
    <property type="match status" value="1"/>
</dbReference>
<dbReference type="FunFam" id="3.90.640.10:FF:000047">
    <property type="entry name" value="Actin, alpha skeletal muscle"/>
    <property type="match status" value="1"/>
</dbReference>
<dbReference type="FunFam" id="3.30.420.40:FF:000404">
    <property type="entry name" value="Major actin"/>
    <property type="match status" value="1"/>
</dbReference>
<dbReference type="FunFam" id="3.30.420.40:FF:000058">
    <property type="entry name" value="Putative actin-related protein 5"/>
    <property type="match status" value="1"/>
</dbReference>
<dbReference type="Gene3D" id="3.30.420.40">
    <property type="match status" value="2"/>
</dbReference>
<dbReference type="Gene3D" id="3.90.640.10">
    <property type="entry name" value="Actin, Chain A, domain 4"/>
    <property type="match status" value="1"/>
</dbReference>
<dbReference type="InterPro" id="IPR004000">
    <property type="entry name" value="Actin"/>
</dbReference>
<dbReference type="InterPro" id="IPR020902">
    <property type="entry name" value="Actin/actin-like_CS"/>
</dbReference>
<dbReference type="InterPro" id="IPR004001">
    <property type="entry name" value="Actin_CS"/>
</dbReference>
<dbReference type="InterPro" id="IPR043129">
    <property type="entry name" value="ATPase_NBD"/>
</dbReference>
<dbReference type="PANTHER" id="PTHR11937">
    <property type="entry name" value="ACTIN"/>
    <property type="match status" value="1"/>
</dbReference>
<dbReference type="Pfam" id="PF00022">
    <property type="entry name" value="Actin"/>
    <property type="match status" value="1"/>
</dbReference>
<dbReference type="PRINTS" id="PR00190">
    <property type="entry name" value="ACTIN"/>
</dbReference>
<dbReference type="SMART" id="SM00268">
    <property type="entry name" value="ACTIN"/>
    <property type="match status" value="1"/>
</dbReference>
<dbReference type="SUPFAM" id="SSF53067">
    <property type="entry name" value="Actin-like ATPase domain"/>
    <property type="match status" value="2"/>
</dbReference>
<dbReference type="PROSITE" id="PS00406">
    <property type="entry name" value="ACTINS_1"/>
    <property type="match status" value="1"/>
</dbReference>
<dbReference type="PROSITE" id="PS00432">
    <property type="entry name" value="ACTINS_2"/>
    <property type="match status" value="1"/>
</dbReference>
<dbReference type="PROSITE" id="PS01132">
    <property type="entry name" value="ACTINS_ACT_LIKE"/>
    <property type="match status" value="1"/>
</dbReference>
<keyword id="KW-0007">Acetylation</keyword>
<keyword id="KW-0067">ATP-binding</keyword>
<keyword id="KW-0963">Cytoplasm</keyword>
<keyword id="KW-0206">Cytoskeleton</keyword>
<keyword id="KW-0378">Hydrolase</keyword>
<keyword id="KW-0488">Methylation</keyword>
<keyword id="KW-0547">Nucleotide-binding</keyword>
<keyword id="KW-0558">Oxidation</keyword>
<keyword id="KW-1185">Reference proteome</keyword>
<proteinExistence type="evidence at transcript level"/>
<reference key="1">
    <citation type="journal article" date="1983" name="Mol. Cell. Biol.">
        <title>DNA sequence of two linked actin genes of sea urchin.</title>
        <authorList>
            <person name="Schuler M.A."/>
            <person name="McOsker P."/>
            <person name="Keller E.B."/>
        </authorList>
    </citation>
    <scope>NUCLEOTIDE SEQUENCE [GENOMIC DNA] OF 1-314</scope>
</reference>
<reference key="2">
    <citation type="journal article" date="1981" name="Mol. Cell. Biol.">
        <title>Organization and expression of multiple actin genes in the sea urchin.</title>
        <authorList>
            <person name="Scheller R.H."/>
            <person name="McAllister L.B."/>
            <person name="Crain W.R. Jr."/>
            <person name="Durica D.S."/>
            <person name="Posakony J.W."/>
            <person name="Thomas T.L."/>
            <person name="Britten R.J."/>
            <person name="Davidson E.H."/>
        </authorList>
    </citation>
    <scope>NUCLEOTIDE SEQUENCE [GENOMIC DNA] OF 315-376</scope>
</reference>
<reference key="3">
    <citation type="journal article" date="1988" name="J. Mol. Evol.">
        <title>DNA sequence analysis and structural relationships among the cytoskeletal actin genes of the sea urchin Strongylocentrotus purpuratus.</title>
        <authorList>
            <person name="Durica D.S."/>
            <person name="Garza D."/>
            <person name="Restrepo M.A."/>
            <person name="Hryniewicz M.M."/>
        </authorList>
    </citation>
    <scope>NUCLEOTIDE SEQUENCE [GENOMIC DNA] OF 1-4</scope>
</reference>
<comment type="function">
    <text>Actins are highly conserved proteins that are involved in various types of cell motility and are ubiquitously expressed in all eukaryotic cells.</text>
</comment>
<comment type="catalytic activity">
    <reaction evidence="6">
        <text>ATP + H2O = ADP + phosphate + H(+)</text>
        <dbReference type="Rhea" id="RHEA:13065"/>
        <dbReference type="ChEBI" id="CHEBI:15377"/>
        <dbReference type="ChEBI" id="CHEBI:15378"/>
        <dbReference type="ChEBI" id="CHEBI:30616"/>
        <dbReference type="ChEBI" id="CHEBI:43474"/>
        <dbReference type="ChEBI" id="CHEBI:456216"/>
    </reaction>
</comment>
<comment type="subcellular location">
    <subcellularLocation>
        <location>Cytoplasm</location>
    </subcellularLocation>
    <subcellularLocation>
        <location>Cytoplasm</location>
        <location>Cytoskeleton</location>
    </subcellularLocation>
</comment>
<comment type="developmental stage">
    <text>Thought to be expressed early in embryogenesis.</text>
</comment>
<comment type="PTM">
    <text evidence="4">Oxidation of Met-45 and Met-48 by MICALs (MICAL1, MICAL2 or MICAL3) to form methionine sulfoxide promotes actin filament depolymerization. MICAL1 and MICAL2 produce the (R)-S-oxide form. The (R)-S-oxide form is reverted by MSRB1 and MSRB2, which promotes actin repolymerization.</text>
</comment>
<comment type="PTM">
    <text evidence="3">Monomethylation at Lys-85 (K85me1) regulates actin-myosin interaction and actomyosin-dependent processes. Demethylation by ALKBH4 is required for maintaining actomyosin dynamics supporting normal cleavage furrow ingression during cytokinesis and cell migration.</text>
</comment>
<comment type="similarity">
    <text evidence="7">Belongs to the actin family.</text>
</comment>
<evidence type="ECO:0000250" key="1">
    <source>
        <dbReference type="UniProtKB" id="P62737"/>
    </source>
</evidence>
<evidence type="ECO:0000250" key="2">
    <source>
        <dbReference type="UniProtKB" id="P62739"/>
    </source>
</evidence>
<evidence type="ECO:0000250" key="3">
    <source>
        <dbReference type="UniProtKB" id="P68032"/>
    </source>
</evidence>
<evidence type="ECO:0000250" key="4">
    <source>
        <dbReference type="UniProtKB" id="P68033"/>
    </source>
</evidence>
<evidence type="ECO:0000250" key="5">
    <source>
        <dbReference type="UniProtKB" id="P68135"/>
    </source>
</evidence>
<evidence type="ECO:0000250" key="6">
    <source>
        <dbReference type="UniProtKB" id="P68137"/>
    </source>
</evidence>
<evidence type="ECO:0000305" key="7"/>
<name>ACTC_STRPU</name>
<accession>Q07903</accession>
<gene>
    <name type="primary">CYIIA</name>
</gene>
<feature type="initiator methionine" description="Removed">
    <location>
        <position position="1"/>
    </location>
</feature>
<feature type="chain" id="PRO_0000443015" description="Actin, cytoskeletal 2A, intermediate form" evidence="1">
    <location>
        <begin position="2"/>
        <end position="376"/>
    </location>
</feature>
<feature type="chain" id="PRO_0000000727" description="Actin, cytoskeletal 2A" evidence="5">
    <location>
        <begin position="3"/>
        <end position="376"/>
    </location>
</feature>
<feature type="modified residue" description="N-acetylcysteine; in intermediate form" evidence="1">
    <location>
        <position position="2"/>
    </location>
</feature>
<feature type="modified residue" description="N-acetylaspartate; in Actin, cytoskeletal 2A" evidence="5">
    <location>
        <position position="3"/>
    </location>
</feature>
<feature type="modified residue" description="Methionine (R)-sulfoxide" evidence="4">
    <location>
        <position position="45"/>
    </location>
</feature>
<feature type="modified residue" description="Methionine (R)-sulfoxide" evidence="4">
    <location>
        <position position="48"/>
    </location>
</feature>
<feature type="modified residue" description="Tele-methylhistidine" evidence="2">
    <location>
        <position position="74"/>
    </location>
</feature>
<feature type="modified residue" description="N6-methyllysine" evidence="3">
    <location>
        <position position="85"/>
    </location>
</feature>
<feature type="unsure residue">
    <location>
        <position position="123"/>
    </location>
</feature>
<feature type="unsure residue">
    <location>
        <position position="188"/>
    </location>
</feature>
<feature type="unsure residue">
    <location>
        <begin position="239"/>
        <end position="240"/>
    </location>
</feature>
<feature type="unsure residue">
    <location>
        <position position="271"/>
    </location>
</feature>
<feature type="unsure residue">
    <location>
        <begin position="309"/>
        <end position="310"/>
    </location>
</feature>
<sequence length="376" mass="41801">MCDDDVAALVVDNGSGMVKAGFAGDDAPRAVFPSIVGRPRHQGVMVGMGQKDSYVGDEAQSKRGILTLKYPIEHGIVTNWDDMEKIWHHTFYNELRVAPEEHPVLLTEAPLNPKANREKMTQIMFETFNSPAMYVAIQAVLSLYASGRTTGIVFDSGDGVSHTVPIYEGYALPHAILRLDLAGRDLTDYLMKILTERGYSFTTTAEREIVRDIKEKLCYVALDFEQEMQTAASSSSLEKSYELPDGQVITIGNERFRAPEALFQPAFLGMESAGIHETCYNSIMKCDVDIRKDLYANSVLSGGSTMYPIAADRMQKEITALAPPTMKIKIIAPPERKYSVWIGGSILASLSTFQQMWISKQEYDESGPSIVHRKCF</sequence>